<organism>
    <name type="scientific">Pinus pinaster</name>
    <name type="common">Maritime pine</name>
    <dbReference type="NCBI Taxonomy" id="71647"/>
    <lineage>
        <taxon>Eukaryota</taxon>
        <taxon>Viridiplantae</taxon>
        <taxon>Streptophyta</taxon>
        <taxon>Embryophyta</taxon>
        <taxon>Tracheophyta</taxon>
        <taxon>Spermatophyta</taxon>
        <taxon>Pinopsida</taxon>
        <taxon>Pinidae</taxon>
        <taxon>Conifers I</taxon>
        <taxon>Pinales</taxon>
        <taxon>Pinaceae</taxon>
        <taxon>Pinus</taxon>
        <taxon>Pinus subgen. Pinus</taxon>
    </lineage>
</organism>
<evidence type="ECO:0000305" key="1"/>
<proteinExistence type="evidence at protein level"/>
<feature type="chain" id="PRO_0000078354" description="Heat shock 70 kDa protein">
    <location>
        <begin position="1" status="less than"/>
        <end position="11" status="greater than"/>
    </location>
</feature>
<feature type="non-terminal residue">
    <location>
        <position position="1"/>
    </location>
</feature>
<feature type="non-terminal residue">
    <location>
        <position position="11"/>
    </location>
</feature>
<dbReference type="GO" id="GO:0005524">
    <property type="term" value="F:ATP binding"/>
    <property type="evidence" value="ECO:0007669"/>
    <property type="project" value="UniProtKB-KW"/>
</dbReference>
<protein>
    <recommendedName>
        <fullName>Heat shock 70 kDa protein</fullName>
    </recommendedName>
</protein>
<keyword id="KW-0067">ATP-binding</keyword>
<keyword id="KW-0903">Direct protein sequencing</keyword>
<keyword id="KW-0547">Nucleotide-binding</keyword>
<keyword id="KW-0346">Stress response</keyword>
<sequence length="11" mass="1228">VEIIANDQGNR</sequence>
<accession>P81672</accession>
<comment type="miscellaneous">
    <text>On the 2D-gel the determined pI of this protein (spot N164) is: 5.4, its MW is: 73 kDa.</text>
</comment>
<comment type="similarity">
    <text evidence="1">Belongs to the heat shock protein 70 family.</text>
</comment>
<reference key="1">
    <citation type="journal article" date="1999" name="Electrophoresis">
        <title>Separation and characterization of needle and xylem maritime pine proteins.</title>
        <authorList>
            <person name="Costa P."/>
            <person name="Pionneau C."/>
            <person name="Bauw G."/>
            <person name="Dubos C."/>
            <person name="Bahrman N."/>
            <person name="Kremer A."/>
            <person name="Frigerio J.-M."/>
            <person name="Plomion C."/>
        </authorList>
    </citation>
    <scope>PROTEIN SEQUENCE</scope>
    <source>
        <tissue>Needle</tissue>
    </source>
</reference>
<name>HSP70_PINPS</name>